<comment type="function">
    <text evidence="1">Binds to DNA and alters its conformation. May be involved in regulation of gene expression, nucleoid organization and DNA protection.</text>
</comment>
<comment type="subunit">
    <text evidence="1">Homodimer.</text>
</comment>
<comment type="subcellular location">
    <subcellularLocation>
        <location evidence="1">Cytoplasm</location>
        <location evidence="1">Nucleoid</location>
    </subcellularLocation>
</comment>
<comment type="similarity">
    <text evidence="1">Belongs to the YbaB/EbfC family.</text>
</comment>
<comment type="sequence caution" evidence="2">
    <conflict type="erroneous initiation">
        <sequence resource="EMBL-CDS" id="AAK22255"/>
    </conflict>
</comment>
<feature type="chain" id="PRO_0000170377" description="Nucleoid-associated protein CC_0268">
    <location>
        <begin position="1"/>
        <end position="109"/>
    </location>
</feature>
<name>Y268_CAUVC</name>
<accession>Q9ABF9</accession>
<proteinExistence type="inferred from homology"/>
<dbReference type="EMBL" id="AE005673">
    <property type="protein sequence ID" value="AAK22255.1"/>
    <property type="status" value="ALT_INIT"/>
    <property type="molecule type" value="Genomic_DNA"/>
</dbReference>
<dbReference type="RefSeq" id="NP_419087.1">
    <property type="nucleotide sequence ID" value="NC_002696.2"/>
</dbReference>
<dbReference type="RefSeq" id="WP_012639925.1">
    <property type="nucleotide sequence ID" value="NC_002696.2"/>
</dbReference>
<dbReference type="SMR" id="Q9ABF9"/>
<dbReference type="STRING" id="190650.CC_0268"/>
<dbReference type="EnsemblBacteria" id="AAK22255">
    <property type="protein sequence ID" value="AAK22255"/>
    <property type="gene ID" value="CC_0268"/>
</dbReference>
<dbReference type="KEGG" id="ccr:CC_0268"/>
<dbReference type="PATRIC" id="fig|190650.5.peg.265"/>
<dbReference type="eggNOG" id="COG0718">
    <property type="taxonomic scope" value="Bacteria"/>
</dbReference>
<dbReference type="HOGENOM" id="CLU_140930_4_1_5"/>
<dbReference type="Proteomes" id="UP000001816">
    <property type="component" value="Chromosome"/>
</dbReference>
<dbReference type="GO" id="GO:0043590">
    <property type="term" value="C:bacterial nucleoid"/>
    <property type="evidence" value="ECO:0007669"/>
    <property type="project" value="UniProtKB-UniRule"/>
</dbReference>
<dbReference type="GO" id="GO:0005829">
    <property type="term" value="C:cytosol"/>
    <property type="evidence" value="ECO:0007669"/>
    <property type="project" value="TreeGrafter"/>
</dbReference>
<dbReference type="GO" id="GO:0003677">
    <property type="term" value="F:DNA binding"/>
    <property type="evidence" value="ECO:0007669"/>
    <property type="project" value="UniProtKB-UniRule"/>
</dbReference>
<dbReference type="Gene3D" id="3.30.1310.10">
    <property type="entry name" value="Nucleoid-associated protein YbaB-like domain"/>
    <property type="match status" value="1"/>
</dbReference>
<dbReference type="HAMAP" id="MF_00274">
    <property type="entry name" value="DNA_YbaB_EbfC"/>
    <property type="match status" value="1"/>
</dbReference>
<dbReference type="InterPro" id="IPR036894">
    <property type="entry name" value="YbaB-like_sf"/>
</dbReference>
<dbReference type="InterPro" id="IPR004401">
    <property type="entry name" value="YbaB/EbfC"/>
</dbReference>
<dbReference type="NCBIfam" id="TIGR00103">
    <property type="entry name" value="DNA_YbaB_EbfC"/>
    <property type="match status" value="1"/>
</dbReference>
<dbReference type="NCBIfam" id="NF011218">
    <property type="entry name" value="PRK14625.1"/>
    <property type="match status" value="1"/>
</dbReference>
<dbReference type="PANTHER" id="PTHR33449">
    <property type="entry name" value="NUCLEOID-ASSOCIATED PROTEIN YBAB"/>
    <property type="match status" value="1"/>
</dbReference>
<dbReference type="PANTHER" id="PTHR33449:SF1">
    <property type="entry name" value="NUCLEOID-ASSOCIATED PROTEIN YBAB"/>
    <property type="match status" value="1"/>
</dbReference>
<dbReference type="Pfam" id="PF02575">
    <property type="entry name" value="YbaB_DNA_bd"/>
    <property type="match status" value="1"/>
</dbReference>
<dbReference type="PIRSF" id="PIRSF004555">
    <property type="entry name" value="UCP004555"/>
    <property type="match status" value="1"/>
</dbReference>
<dbReference type="SUPFAM" id="SSF82607">
    <property type="entry name" value="YbaB-like"/>
    <property type="match status" value="1"/>
</dbReference>
<organism>
    <name type="scientific">Caulobacter vibrioides (strain ATCC 19089 / CIP 103742 / CB 15)</name>
    <name type="common">Caulobacter crescentus</name>
    <dbReference type="NCBI Taxonomy" id="190650"/>
    <lineage>
        <taxon>Bacteria</taxon>
        <taxon>Pseudomonadati</taxon>
        <taxon>Pseudomonadota</taxon>
        <taxon>Alphaproteobacteria</taxon>
        <taxon>Caulobacterales</taxon>
        <taxon>Caulobacteraceae</taxon>
        <taxon>Caulobacter</taxon>
    </lineage>
</organism>
<protein>
    <recommendedName>
        <fullName evidence="1">Nucleoid-associated protein CC_0268</fullName>
    </recommendedName>
</protein>
<sequence>MKDLGGLMKQAQAMQQKLADAQARLAETTVDGTSGGGMVTVTLMGNGELVRVLMDESLVQPGEGEVIADLIIAAHADAKKKLDAKQAQMMQDAAGPMAGLMGGLPGMKF</sequence>
<evidence type="ECO:0000255" key="1">
    <source>
        <dbReference type="HAMAP-Rule" id="MF_00274"/>
    </source>
</evidence>
<evidence type="ECO:0000305" key="2"/>
<keyword id="KW-0963">Cytoplasm</keyword>
<keyword id="KW-0238">DNA-binding</keyword>
<keyword id="KW-1185">Reference proteome</keyword>
<gene>
    <name type="ordered locus">CC_0268</name>
</gene>
<reference key="1">
    <citation type="journal article" date="2001" name="Proc. Natl. Acad. Sci. U.S.A.">
        <title>Complete genome sequence of Caulobacter crescentus.</title>
        <authorList>
            <person name="Nierman W.C."/>
            <person name="Feldblyum T.V."/>
            <person name="Laub M.T."/>
            <person name="Paulsen I.T."/>
            <person name="Nelson K.E."/>
            <person name="Eisen J.A."/>
            <person name="Heidelberg J.F."/>
            <person name="Alley M.R.K."/>
            <person name="Ohta N."/>
            <person name="Maddock J.R."/>
            <person name="Potocka I."/>
            <person name="Nelson W.C."/>
            <person name="Newton A."/>
            <person name="Stephens C."/>
            <person name="Phadke N.D."/>
            <person name="Ely B."/>
            <person name="DeBoy R.T."/>
            <person name="Dodson R.J."/>
            <person name="Durkin A.S."/>
            <person name="Gwinn M.L."/>
            <person name="Haft D.H."/>
            <person name="Kolonay J.F."/>
            <person name="Smit J."/>
            <person name="Craven M.B."/>
            <person name="Khouri H.M."/>
            <person name="Shetty J."/>
            <person name="Berry K.J."/>
            <person name="Utterback T.R."/>
            <person name="Tran K."/>
            <person name="Wolf A.M."/>
            <person name="Vamathevan J.J."/>
            <person name="Ermolaeva M.D."/>
            <person name="White O."/>
            <person name="Salzberg S.L."/>
            <person name="Venter J.C."/>
            <person name="Shapiro L."/>
            <person name="Fraser C.M."/>
        </authorList>
    </citation>
    <scope>NUCLEOTIDE SEQUENCE [LARGE SCALE GENOMIC DNA]</scope>
    <source>
        <strain>ATCC 19089 / CIP 103742 / CB 15</strain>
    </source>
</reference>